<gene>
    <name evidence="1" type="primary">rplD</name>
    <name type="ordered locus">EFER_3302</name>
</gene>
<feature type="chain" id="PRO_1000142126" description="Large ribosomal subunit protein uL4">
    <location>
        <begin position="1"/>
        <end position="201"/>
    </location>
</feature>
<feature type="region of interest" description="Disordered" evidence="2">
    <location>
        <begin position="44"/>
        <end position="71"/>
    </location>
</feature>
<reference key="1">
    <citation type="journal article" date="2009" name="PLoS Genet.">
        <title>Organised genome dynamics in the Escherichia coli species results in highly diverse adaptive paths.</title>
        <authorList>
            <person name="Touchon M."/>
            <person name="Hoede C."/>
            <person name="Tenaillon O."/>
            <person name="Barbe V."/>
            <person name="Baeriswyl S."/>
            <person name="Bidet P."/>
            <person name="Bingen E."/>
            <person name="Bonacorsi S."/>
            <person name="Bouchier C."/>
            <person name="Bouvet O."/>
            <person name="Calteau A."/>
            <person name="Chiapello H."/>
            <person name="Clermont O."/>
            <person name="Cruveiller S."/>
            <person name="Danchin A."/>
            <person name="Diard M."/>
            <person name="Dossat C."/>
            <person name="Karoui M.E."/>
            <person name="Frapy E."/>
            <person name="Garry L."/>
            <person name="Ghigo J.M."/>
            <person name="Gilles A.M."/>
            <person name="Johnson J."/>
            <person name="Le Bouguenec C."/>
            <person name="Lescat M."/>
            <person name="Mangenot S."/>
            <person name="Martinez-Jehanne V."/>
            <person name="Matic I."/>
            <person name="Nassif X."/>
            <person name="Oztas S."/>
            <person name="Petit M.A."/>
            <person name="Pichon C."/>
            <person name="Rouy Z."/>
            <person name="Ruf C.S."/>
            <person name="Schneider D."/>
            <person name="Tourret J."/>
            <person name="Vacherie B."/>
            <person name="Vallenet D."/>
            <person name="Medigue C."/>
            <person name="Rocha E.P.C."/>
            <person name="Denamur E."/>
        </authorList>
    </citation>
    <scope>NUCLEOTIDE SEQUENCE [LARGE SCALE GENOMIC DNA]</scope>
    <source>
        <strain>ATCC 35469 / DSM 13698 / BCRC 15582 / CCUG 18766 / IAM 14443 / JCM 21226 / LMG 7866 / NBRC 102419 / NCTC 12128 / CDC 0568-73</strain>
    </source>
</reference>
<evidence type="ECO:0000255" key="1">
    <source>
        <dbReference type="HAMAP-Rule" id="MF_01328"/>
    </source>
</evidence>
<evidence type="ECO:0000256" key="2">
    <source>
        <dbReference type="SAM" id="MobiDB-lite"/>
    </source>
</evidence>
<evidence type="ECO:0000305" key="3"/>
<protein>
    <recommendedName>
        <fullName evidence="1">Large ribosomal subunit protein uL4</fullName>
    </recommendedName>
    <alternativeName>
        <fullName evidence="3">50S ribosomal protein L4</fullName>
    </alternativeName>
</protein>
<proteinExistence type="inferred from homology"/>
<keyword id="KW-0687">Ribonucleoprotein</keyword>
<keyword id="KW-0689">Ribosomal protein</keyword>
<keyword id="KW-0694">RNA-binding</keyword>
<keyword id="KW-0699">rRNA-binding</keyword>
<name>RL4_ESCF3</name>
<organism>
    <name type="scientific">Escherichia fergusonii (strain ATCC 35469 / DSM 13698 / CCUG 18766 / IAM 14443 / JCM 21226 / LMG 7866 / NBRC 102419 / NCTC 12128 / CDC 0568-73)</name>
    <dbReference type="NCBI Taxonomy" id="585054"/>
    <lineage>
        <taxon>Bacteria</taxon>
        <taxon>Pseudomonadati</taxon>
        <taxon>Pseudomonadota</taxon>
        <taxon>Gammaproteobacteria</taxon>
        <taxon>Enterobacterales</taxon>
        <taxon>Enterobacteriaceae</taxon>
        <taxon>Escherichia</taxon>
    </lineage>
</organism>
<accession>B7LRT5</accession>
<dbReference type="EMBL" id="CU928158">
    <property type="protein sequence ID" value="CAQ90782.1"/>
    <property type="molecule type" value="Genomic_DNA"/>
</dbReference>
<dbReference type="RefSeq" id="WP_000424395.1">
    <property type="nucleotide sequence ID" value="NC_011740.1"/>
</dbReference>
<dbReference type="SMR" id="B7LRT5"/>
<dbReference type="GeneID" id="97442859"/>
<dbReference type="KEGG" id="efe:EFER_3302"/>
<dbReference type="HOGENOM" id="CLU_041575_5_2_6"/>
<dbReference type="OrthoDB" id="9803201at2"/>
<dbReference type="Proteomes" id="UP000000745">
    <property type="component" value="Chromosome"/>
</dbReference>
<dbReference type="GO" id="GO:1990904">
    <property type="term" value="C:ribonucleoprotein complex"/>
    <property type="evidence" value="ECO:0007669"/>
    <property type="project" value="UniProtKB-KW"/>
</dbReference>
<dbReference type="GO" id="GO:0005840">
    <property type="term" value="C:ribosome"/>
    <property type="evidence" value="ECO:0007669"/>
    <property type="project" value="UniProtKB-KW"/>
</dbReference>
<dbReference type="GO" id="GO:0019843">
    <property type="term" value="F:rRNA binding"/>
    <property type="evidence" value="ECO:0007669"/>
    <property type="project" value="UniProtKB-UniRule"/>
</dbReference>
<dbReference type="GO" id="GO:0003735">
    <property type="term" value="F:structural constituent of ribosome"/>
    <property type="evidence" value="ECO:0007669"/>
    <property type="project" value="InterPro"/>
</dbReference>
<dbReference type="GO" id="GO:0006412">
    <property type="term" value="P:translation"/>
    <property type="evidence" value="ECO:0007669"/>
    <property type="project" value="UniProtKB-UniRule"/>
</dbReference>
<dbReference type="FunFam" id="3.40.1370.10:FF:000001">
    <property type="entry name" value="50S ribosomal protein L4"/>
    <property type="match status" value="1"/>
</dbReference>
<dbReference type="Gene3D" id="3.40.1370.10">
    <property type="match status" value="1"/>
</dbReference>
<dbReference type="HAMAP" id="MF_01328_B">
    <property type="entry name" value="Ribosomal_uL4_B"/>
    <property type="match status" value="1"/>
</dbReference>
<dbReference type="InterPro" id="IPR002136">
    <property type="entry name" value="Ribosomal_uL4"/>
</dbReference>
<dbReference type="InterPro" id="IPR013005">
    <property type="entry name" value="Ribosomal_uL4-like"/>
</dbReference>
<dbReference type="InterPro" id="IPR023574">
    <property type="entry name" value="Ribosomal_uL4_dom_sf"/>
</dbReference>
<dbReference type="NCBIfam" id="TIGR03953">
    <property type="entry name" value="rplD_bact"/>
    <property type="match status" value="1"/>
</dbReference>
<dbReference type="PANTHER" id="PTHR10746">
    <property type="entry name" value="50S RIBOSOMAL PROTEIN L4"/>
    <property type="match status" value="1"/>
</dbReference>
<dbReference type="PANTHER" id="PTHR10746:SF6">
    <property type="entry name" value="LARGE RIBOSOMAL SUBUNIT PROTEIN UL4M"/>
    <property type="match status" value="1"/>
</dbReference>
<dbReference type="Pfam" id="PF00573">
    <property type="entry name" value="Ribosomal_L4"/>
    <property type="match status" value="1"/>
</dbReference>
<dbReference type="SUPFAM" id="SSF52166">
    <property type="entry name" value="Ribosomal protein L4"/>
    <property type="match status" value="1"/>
</dbReference>
<comment type="function">
    <text evidence="1">One of the primary rRNA binding proteins, this protein initially binds near the 5'-end of the 23S rRNA. It is important during the early stages of 50S assembly. It makes multiple contacts with different domains of the 23S rRNA in the assembled 50S subunit and ribosome.</text>
</comment>
<comment type="function">
    <text evidence="1">Forms part of the polypeptide exit tunnel.</text>
</comment>
<comment type="subunit">
    <text evidence="1">Part of the 50S ribosomal subunit.</text>
</comment>
<comment type="similarity">
    <text evidence="1">Belongs to the universal ribosomal protein uL4 family.</text>
</comment>
<sequence>MELVLKDAQSALTVSETTFGRDFNEALVHQVVVAYAAGARQGTRAQKTRAEVTGSGKKPWRQKGTGRARSGSIKSPIWRSGGVTFAARPQDHSQKVNKKMYRGALKSILSELVRQDRLIVVEKFSVEAPKTKLLAQKLKDMALEDVLIITGELDENLFLAARNLHKVDVRDATGIDPVSLIAFDKVVMTADAVKQVEEMLA</sequence>